<name>PHYDA_SHIBS</name>
<sequence>MRVLIKNGTVVNADGQAKQDLLIESGIVRQLGNNISPQLPYEEIDATGCYVFPGGVDVHTHFNIDVGIARSCDDFFTGTRAAACGGTTTIIDHMGFGPNGCRLRHQLEVYRGYAAHKAVIDYSFHGVIQHINHAILDEIPMMVEEGLSSFKLYLTYQYKLNDDEVLQALRRLHESGALTTVHPENDAAIASKRAEFIAAGLTAPRYHALSRPLECEAEAIARMINLAQIAGNAPLYIVHLSNGLGLDYLRLARANHQPVWVETCPQYLLLDERSYDTEDGMKFILSPPLRNVREQDKLWCGISDGAIDVVATDHCTFSMAQRLQISKGDFSRCPNGLPGVENRMQLLFSSGVMTGRITPERFVELTSAMPARLFGLWPQKGLLAPGSDGDVVIIDPRQSQQIQHRHLHDNADYSPWEGFTCQGAIVRTLSRGETIFCDGTFTGKAGRGRFLRRKPFVPPVL</sequence>
<proteinExistence type="inferred from homology"/>
<dbReference type="EC" id="3.5.2.-" evidence="1"/>
<dbReference type="EMBL" id="CP000036">
    <property type="protein sequence ID" value="ABB67615.1"/>
    <property type="status" value="ALT_INIT"/>
    <property type="molecule type" value="Genomic_DNA"/>
</dbReference>
<dbReference type="RefSeq" id="WP_001264452.1">
    <property type="nucleotide sequence ID" value="NC_007613.1"/>
</dbReference>
<dbReference type="SMR" id="Q31WE3"/>
<dbReference type="GeneID" id="93779129"/>
<dbReference type="KEGG" id="sbo:SBO_3111"/>
<dbReference type="HOGENOM" id="CLU_015572_2_0_6"/>
<dbReference type="Proteomes" id="UP000007067">
    <property type="component" value="Chromosome"/>
</dbReference>
<dbReference type="GO" id="GO:0005829">
    <property type="term" value="C:cytosol"/>
    <property type="evidence" value="ECO:0007669"/>
    <property type="project" value="TreeGrafter"/>
</dbReference>
<dbReference type="GO" id="GO:0016812">
    <property type="term" value="F:hydrolase activity, acting on carbon-nitrogen (but not peptide) bonds, in cyclic amides"/>
    <property type="evidence" value="ECO:0007669"/>
    <property type="project" value="UniProtKB-UniRule"/>
</dbReference>
<dbReference type="GO" id="GO:0046872">
    <property type="term" value="F:metal ion binding"/>
    <property type="evidence" value="ECO:0007669"/>
    <property type="project" value="UniProtKB-KW"/>
</dbReference>
<dbReference type="GO" id="GO:0006208">
    <property type="term" value="P:pyrimidine nucleobase catabolic process"/>
    <property type="evidence" value="ECO:0007669"/>
    <property type="project" value="InterPro"/>
</dbReference>
<dbReference type="CDD" id="cd01314">
    <property type="entry name" value="D-HYD"/>
    <property type="match status" value="1"/>
</dbReference>
<dbReference type="FunFam" id="3.20.20.140:FF:000026">
    <property type="entry name" value="D-phenylhydantoinase"/>
    <property type="match status" value="1"/>
</dbReference>
<dbReference type="Gene3D" id="3.20.20.140">
    <property type="entry name" value="Metal-dependent hydrolases"/>
    <property type="match status" value="1"/>
</dbReference>
<dbReference type="Gene3D" id="2.30.40.10">
    <property type="entry name" value="Urease, subunit C, domain 1"/>
    <property type="match status" value="1"/>
</dbReference>
<dbReference type="HAMAP" id="MF_01644">
    <property type="entry name" value="D_hydantoinase"/>
    <property type="match status" value="1"/>
</dbReference>
<dbReference type="InterPro" id="IPR006680">
    <property type="entry name" value="Amidohydro-rel"/>
</dbReference>
<dbReference type="InterPro" id="IPR023766">
    <property type="entry name" value="D_phenylhydantoinase"/>
</dbReference>
<dbReference type="InterPro" id="IPR011778">
    <property type="entry name" value="Hydantoinase/dihydroPyrase"/>
</dbReference>
<dbReference type="InterPro" id="IPR011059">
    <property type="entry name" value="Metal-dep_hydrolase_composite"/>
</dbReference>
<dbReference type="InterPro" id="IPR032466">
    <property type="entry name" value="Metal_Hydrolase"/>
</dbReference>
<dbReference type="InterPro" id="IPR050378">
    <property type="entry name" value="Metallo-dep_Hydrolases_sf"/>
</dbReference>
<dbReference type="NCBIfam" id="TIGR02033">
    <property type="entry name" value="D-hydantoinase"/>
    <property type="match status" value="1"/>
</dbReference>
<dbReference type="PANTHER" id="PTHR11647:SF1">
    <property type="entry name" value="COLLAPSIN RESPONSE MEDIATOR PROTEIN"/>
    <property type="match status" value="1"/>
</dbReference>
<dbReference type="PANTHER" id="PTHR11647">
    <property type="entry name" value="HYDRANTOINASE/DIHYDROPYRIMIDINASE FAMILY MEMBER"/>
    <property type="match status" value="1"/>
</dbReference>
<dbReference type="Pfam" id="PF01979">
    <property type="entry name" value="Amidohydro_1"/>
    <property type="match status" value="1"/>
</dbReference>
<dbReference type="SUPFAM" id="SSF51338">
    <property type="entry name" value="Composite domain of metallo-dependent hydrolases"/>
    <property type="match status" value="2"/>
</dbReference>
<dbReference type="SUPFAM" id="SSF51556">
    <property type="entry name" value="Metallo-dependent hydrolases"/>
    <property type="match status" value="1"/>
</dbReference>
<protein>
    <recommendedName>
        <fullName evidence="1">D-phenylhydantoinase</fullName>
        <ecNumber evidence="1">3.5.2.-</ecNumber>
    </recommendedName>
    <alternativeName>
        <fullName evidence="1">Hydantoin-utilizing enzyme HyuA</fullName>
    </alternativeName>
</protein>
<organism>
    <name type="scientific">Shigella boydii serotype 4 (strain Sb227)</name>
    <dbReference type="NCBI Taxonomy" id="300268"/>
    <lineage>
        <taxon>Bacteria</taxon>
        <taxon>Pseudomonadati</taxon>
        <taxon>Pseudomonadota</taxon>
        <taxon>Gammaproteobacteria</taxon>
        <taxon>Enterobacterales</taxon>
        <taxon>Enterobacteriaceae</taxon>
        <taxon>Shigella</taxon>
    </lineage>
</organism>
<keyword id="KW-0378">Hydrolase</keyword>
<keyword id="KW-0479">Metal-binding</keyword>
<comment type="function">
    <text evidence="1">Catalyzes the stereospecific hydrolysis of the cyclic amide bond of D-hydantoin derivatives with an aromatic side chains at the 5'-position. Has no activity on dihydropyrimidines. The physiological function is unknown.</text>
</comment>
<comment type="catalytic activity">
    <reaction evidence="1">
        <text>D-5-phenylhydantoin + H2O = N-carbamoyl-D-phenylglycine + H(+)</text>
        <dbReference type="Rhea" id="RHEA:51664"/>
        <dbReference type="ChEBI" id="CHEBI:15377"/>
        <dbReference type="ChEBI" id="CHEBI:15378"/>
        <dbReference type="ChEBI" id="CHEBI:140750"/>
        <dbReference type="ChEBI" id="CHEBI:140758"/>
    </reaction>
</comment>
<comment type="cofactor">
    <cofactor evidence="1">
        <name>a divalent metal cation</name>
        <dbReference type="ChEBI" id="CHEBI:60240"/>
    </cofactor>
    <text evidence="1">Binds 2 divalent metal cations per subunit.</text>
</comment>
<comment type="subunit">
    <text evidence="1">Homotetramer.</text>
</comment>
<comment type="PTM">
    <text evidence="1">Carboxylation allows a single lysine to coordinate two divalent metal cations.</text>
</comment>
<comment type="similarity">
    <text evidence="1">Belongs to the metallo-dependent hydrolases superfamily. Hydantoinase/dihydropyrimidinase family.</text>
</comment>
<comment type="sequence caution" evidence="2">
    <conflict type="erroneous initiation">
        <sequence resource="EMBL-CDS" id="ABB67615"/>
    </conflict>
</comment>
<evidence type="ECO:0000255" key="1">
    <source>
        <dbReference type="HAMAP-Rule" id="MF_01644"/>
    </source>
</evidence>
<evidence type="ECO:0000305" key="2"/>
<feature type="chain" id="PRO_0000317656" description="D-phenylhydantoinase">
    <location>
        <begin position="1"/>
        <end position="461"/>
    </location>
</feature>
<feature type="binding site" evidence="1">
    <location>
        <position position="59"/>
    </location>
    <ligand>
        <name>a divalent metal cation</name>
        <dbReference type="ChEBI" id="CHEBI:60240"/>
        <label>1</label>
    </ligand>
</feature>
<feature type="binding site" evidence="1">
    <location>
        <position position="61"/>
    </location>
    <ligand>
        <name>a divalent metal cation</name>
        <dbReference type="ChEBI" id="CHEBI:60240"/>
        <label>1</label>
    </ligand>
</feature>
<feature type="binding site" description="via carbamate group" evidence="1">
    <location>
        <position position="151"/>
    </location>
    <ligand>
        <name>a divalent metal cation</name>
        <dbReference type="ChEBI" id="CHEBI:60240"/>
        <label>1</label>
    </ligand>
</feature>
<feature type="binding site" description="via carbamate group" evidence="1">
    <location>
        <position position="151"/>
    </location>
    <ligand>
        <name>a divalent metal cation</name>
        <dbReference type="ChEBI" id="CHEBI:60240"/>
        <label>2</label>
    </ligand>
</feature>
<feature type="binding site" evidence="1">
    <location>
        <position position="156"/>
    </location>
    <ligand>
        <name>substrate</name>
    </ligand>
</feature>
<feature type="binding site" evidence="1">
    <location>
        <position position="182"/>
    </location>
    <ligand>
        <name>a divalent metal cation</name>
        <dbReference type="ChEBI" id="CHEBI:60240"/>
        <label>2</label>
    </ligand>
</feature>
<feature type="binding site" evidence="1">
    <location>
        <position position="239"/>
    </location>
    <ligand>
        <name>a divalent metal cation</name>
        <dbReference type="ChEBI" id="CHEBI:60240"/>
        <label>2</label>
    </ligand>
</feature>
<feature type="binding site" evidence="1">
    <location>
        <position position="286"/>
    </location>
    <ligand>
        <name>substrate</name>
    </ligand>
</feature>
<feature type="binding site" evidence="1">
    <location>
        <position position="313"/>
    </location>
    <ligand>
        <name>a divalent metal cation</name>
        <dbReference type="ChEBI" id="CHEBI:60240"/>
        <label>1</label>
    </ligand>
</feature>
<feature type="binding site" evidence="1">
    <location>
        <position position="335"/>
    </location>
    <ligand>
        <name>substrate</name>
    </ligand>
</feature>
<feature type="modified residue" description="N6-carboxylysine" evidence="1">
    <location>
        <position position="151"/>
    </location>
</feature>
<accession>Q31WE3</accession>
<reference key="1">
    <citation type="journal article" date="2005" name="Nucleic Acids Res.">
        <title>Genome dynamics and diversity of Shigella species, the etiologic agents of bacillary dysentery.</title>
        <authorList>
            <person name="Yang F."/>
            <person name="Yang J."/>
            <person name="Zhang X."/>
            <person name="Chen L."/>
            <person name="Jiang Y."/>
            <person name="Yan Y."/>
            <person name="Tang X."/>
            <person name="Wang J."/>
            <person name="Xiong Z."/>
            <person name="Dong J."/>
            <person name="Xue Y."/>
            <person name="Zhu Y."/>
            <person name="Xu X."/>
            <person name="Sun L."/>
            <person name="Chen S."/>
            <person name="Nie H."/>
            <person name="Peng J."/>
            <person name="Xu J."/>
            <person name="Wang Y."/>
            <person name="Yuan Z."/>
            <person name="Wen Y."/>
            <person name="Yao Z."/>
            <person name="Shen Y."/>
            <person name="Qiang B."/>
            <person name="Hou Y."/>
            <person name="Yu J."/>
            <person name="Jin Q."/>
        </authorList>
    </citation>
    <scope>NUCLEOTIDE SEQUENCE [LARGE SCALE GENOMIC DNA]</scope>
    <source>
        <strain>Sb227</strain>
    </source>
</reference>
<gene>
    <name evidence="1" type="primary">hyuA</name>
    <name type="ordered locus">SBO_3111</name>
</gene>